<dbReference type="EMBL" id="AP008934">
    <property type="protein sequence ID" value="BAE18125.1"/>
    <property type="molecule type" value="Genomic_DNA"/>
</dbReference>
<dbReference type="SMR" id="Q49YL2"/>
<dbReference type="KEGG" id="ssp:SSP0980"/>
<dbReference type="eggNOG" id="COG0239">
    <property type="taxonomic scope" value="Bacteria"/>
</dbReference>
<dbReference type="HOGENOM" id="CLU_114342_3_2_9"/>
<dbReference type="OrthoDB" id="9799631at2"/>
<dbReference type="Proteomes" id="UP000006371">
    <property type="component" value="Chromosome"/>
</dbReference>
<dbReference type="GO" id="GO:0005886">
    <property type="term" value="C:plasma membrane"/>
    <property type="evidence" value="ECO:0007669"/>
    <property type="project" value="UniProtKB-SubCell"/>
</dbReference>
<dbReference type="GO" id="GO:0062054">
    <property type="term" value="F:fluoride channel activity"/>
    <property type="evidence" value="ECO:0007669"/>
    <property type="project" value="UniProtKB-UniRule"/>
</dbReference>
<dbReference type="GO" id="GO:0046872">
    <property type="term" value="F:metal ion binding"/>
    <property type="evidence" value="ECO:0007669"/>
    <property type="project" value="UniProtKB-KW"/>
</dbReference>
<dbReference type="GO" id="GO:0140114">
    <property type="term" value="P:cellular detoxification of fluoride"/>
    <property type="evidence" value="ECO:0007669"/>
    <property type="project" value="UniProtKB-UniRule"/>
</dbReference>
<dbReference type="HAMAP" id="MF_00454">
    <property type="entry name" value="FluC"/>
    <property type="match status" value="1"/>
</dbReference>
<dbReference type="InterPro" id="IPR003691">
    <property type="entry name" value="FluC"/>
</dbReference>
<dbReference type="NCBIfam" id="NF010797">
    <property type="entry name" value="PRK14201.1"/>
    <property type="match status" value="1"/>
</dbReference>
<dbReference type="PANTHER" id="PTHR28259">
    <property type="entry name" value="FLUORIDE EXPORT PROTEIN 1-RELATED"/>
    <property type="match status" value="1"/>
</dbReference>
<dbReference type="PANTHER" id="PTHR28259:SF16">
    <property type="entry name" value="FLUORIDE-SPECIFIC ION CHANNEL FLUC 2"/>
    <property type="match status" value="1"/>
</dbReference>
<dbReference type="Pfam" id="PF02537">
    <property type="entry name" value="CRCB"/>
    <property type="match status" value="1"/>
</dbReference>
<gene>
    <name evidence="1" type="primary">fluC2</name>
    <name evidence="1" type="synonym">crcB2</name>
    <name type="ordered locus">SSP0980</name>
</gene>
<feature type="chain" id="PRO_0000252949" description="Fluoride-specific ion channel FluC 2">
    <location>
        <begin position="1"/>
        <end position="121"/>
    </location>
</feature>
<feature type="transmembrane region" description="Helical" evidence="1">
    <location>
        <begin position="3"/>
        <end position="23"/>
    </location>
</feature>
<feature type="transmembrane region" description="Helical" evidence="1">
    <location>
        <begin position="31"/>
        <end position="51"/>
    </location>
</feature>
<feature type="transmembrane region" description="Helical" evidence="1">
    <location>
        <begin position="64"/>
        <end position="84"/>
    </location>
</feature>
<feature type="transmembrane region" description="Helical" evidence="1">
    <location>
        <begin position="92"/>
        <end position="112"/>
    </location>
</feature>
<feature type="binding site" evidence="1">
    <location>
        <position position="71"/>
    </location>
    <ligand>
        <name>Na(+)</name>
        <dbReference type="ChEBI" id="CHEBI:29101"/>
        <note>structural</note>
    </ligand>
</feature>
<feature type="binding site" evidence="1">
    <location>
        <position position="74"/>
    </location>
    <ligand>
        <name>Na(+)</name>
        <dbReference type="ChEBI" id="CHEBI:29101"/>
        <note>structural</note>
    </ligand>
</feature>
<accession>Q49YL2</accession>
<proteinExistence type="inferred from homology"/>
<reference key="1">
    <citation type="journal article" date="2005" name="Proc. Natl. Acad. Sci. U.S.A.">
        <title>Whole genome sequence of Staphylococcus saprophyticus reveals the pathogenesis of uncomplicated urinary tract infection.</title>
        <authorList>
            <person name="Kuroda M."/>
            <person name="Yamashita A."/>
            <person name="Hirakawa H."/>
            <person name="Kumano M."/>
            <person name="Morikawa K."/>
            <person name="Higashide M."/>
            <person name="Maruyama A."/>
            <person name="Inose Y."/>
            <person name="Matoba K."/>
            <person name="Toh H."/>
            <person name="Kuhara S."/>
            <person name="Hattori M."/>
            <person name="Ohta T."/>
        </authorList>
    </citation>
    <scope>NUCLEOTIDE SEQUENCE [LARGE SCALE GENOMIC DNA]</scope>
    <source>
        <strain>ATCC 15305 / DSM 20229 / NCIMB 8711 / NCTC 7292 / S-41</strain>
    </source>
</reference>
<protein>
    <recommendedName>
        <fullName evidence="1">Fluoride-specific ion channel FluC 2</fullName>
    </recommendedName>
</protein>
<comment type="function">
    <text evidence="1">Fluoride-specific ion channel. Important for reducing fluoride concentration in the cell, thus reducing its toxicity.</text>
</comment>
<comment type="catalytic activity">
    <reaction evidence="1">
        <text>fluoride(in) = fluoride(out)</text>
        <dbReference type="Rhea" id="RHEA:76159"/>
        <dbReference type="ChEBI" id="CHEBI:17051"/>
    </reaction>
    <physiologicalReaction direction="left-to-right" evidence="1">
        <dbReference type="Rhea" id="RHEA:76160"/>
    </physiologicalReaction>
</comment>
<comment type="activity regulation">
    <text evidence="1">Na(+) is not transported, but it plays an essential structural role and its presence is essential for fluoride channel function.</text>
</comment>
<comment type="subcellular location">
    <subcellularLocation>
        <location evidence="1">Cell membrane</location>
        <topology evidence="1">Multi-pass membrane protein</topology>
    </subcellularLocation>
</comment>
<comment type="similarity">
    <text evidence="1">Belongs to the fluoride channel Fluc/FEX (TC 1.A.43) family.</text>
</comment>
<name>FLUC2_STAS1</name>
<keyword id="KW-1003">Cell membrane</keyword>
<keyword id="KW-0407">Ion channel</keyword>
<keyword id="KW-0406">Ion transport</keyword>
<keyword id="KW-0472">Membrane</keyword>
<keyword id="KW-0479">Metal-binding</keyword>
<keyword id="KW-1185">Reference proteome</keyword>
<keyword id="KW-0915">Sodium</keyword>
<keyword id="KW-0812">Transmembrane</keyword>
<keyword id="KW-1133">Transmembrane helix</keyword>
<keyword id="KW-0813">Transport</keyword>
<evidence type="ECO:0000255" key="1">
    <source>
        <dbReference type="HAMAP-Rule" id="MF_00454"/>
    </source>
</evidence>
<organism>
    <name type="scientific">Staphylococcus saprophyticus subsp. saprophyticus (strain ATCC 15305 / DSM 20229 / NCIMB 8711 / NCTC 7292 / S-41)</name>
    <dbReference type="NCBI Taxonomy" id="342451"/>
    <lineage>
        <taxon>Bacteria</taxon>
        <taxon>Bacillati</taxon>
        <taxon>Bacillota</taxon>
        <taxon>Bacilli</taxon>
        <taxon>Bacillales</taxon>
        <taxon>Staphylococcaceae</taxon>
        <taxon>Staphylococcus</taxon>
    </lineage>
</organism>
<sequence>MQYLFIFLGGAVGALLRYLLSFINTSFEMPIGTFIANLCGAFLMGFLGTLAIQYFNNSPMLKKGITTGFIGSLTTFSTFQFELVQFFESGSFILLIVYALTSYIFGILLCFLGVRLGAKIS</sequence>